<name>FOSB_BACC4</name>
<sequence length="138" mass="16464">MLRGINHICFSVSNLENSIMFYEKVLEGELLVKGRKLAYFNICGVWIALNEETHISRNEIHQSYTHIAFSVEQEDFKCLIQRLEENDVHILQGRERDVRDCESIYFVDPDGHKFEFHSGTLQDRLNYYRDEKPHMTFY</sequence>
<comment type="function">
    <text evidence="1">Metallothiol transferase which confers resistance to fosfomycin by catalyzing the addition of a thiol cofactor to fosfomycin. L-cysteine is probably the physiological thiol donor.</text>
</comment>
<comment type="cofactor">
    <cofactor evidence="1">
        <name>Mg(2+)</name>
        <dbReference type="ChEBI" id="CHEBI:18420"/>
    </cofactor>
</comment>
<comment type="subunit">
    <text evidence="1">Homodimer.</text>
</comment>
<comment type="subcellular location">
    <subcellularLocation>
        <location evidence="1">Cytoplasm</location>
    </subcellularLocation>
</comment>
<comment type="similarity">
    <text evidence="1">Belongs to the fosfomycin resistance protein family. FosB subfamily.</text>
</comment>
<reference key="1">
    <citation type="submission" date="2008-10" db="EMBL/GenBank/DDBJ databases">
        <title>Genome sequence of Bacillus cereus B4264.</title>
        <authorList>
            <person name="Dodson R.J."/>
            <person name="Durkin A.S."/>
            <person name="Rosovitz M.J."/>
            <person name="Rasko D.A."/>
            <person name="Hoffmaster A."/>
            <person name="Ravel J."/>
            <person name="Sutton G."/>
        </authorList>
    </citation>
    <scope>NUCLEOTIDE SEQUENCE [LARGE SCALE GENOMIC DNA]</scope>
    <source>
        <strain>B4264</strain>
    </source>
</reference>
<accession>B7HJF3</accession>
<proteinExistence type="inferred from homology"/>
<keyword id="KW-0046">Antibiotic resistance</keyword>
<keyword id="KW-0963">Cytoplasm</keyword>
<keyword id="KW-0460">Magnesium</keyword>
<keyword id="KW-0479">Metal-binding</keyword>
<keyword id="KW-0808">Transferase</keyword>
<feature type="chain" id="PRO_1000146147" description="Metallothiol transferase FosB">
    <location>
        <begin position="1"/>
        <end position="138"/>
    </location>
</feature>
<feature type="domain" description="VOC" evidence="2">
    <location>
        <begin position="4"/>
        <end position="119"/>
    </location>
</feature>
<feature type="active site" description="Proton donor/acceptor" evidence="2">
    <location>
        <position position="115"/>
    </location>
</feature>
<feature type="binding site" evidence="1">
    <location>
        <position position="7"/>
    </location>
    <ligand>
        <name>Mg(2+)</name>
        <dbReference type="ChEBI" id="CHEBI:18420"/>
    </ligand>
</feature>
<feature type="binding site" evidence="1">
    <location>
        <position position="66"/>
    </location>
    <ligand>
        <name>Mg(2+)</name>
        <dbReference type="ChEBI" id="CHEBI:18420"/>
    </ligand>
</feature>
<feature type="binding site" evidence="1">
    <location>
        <position position="115"/>
    </location>
    <ligand>
        <name>Mg(2+)</name>
        <dbReference type="ChEBI" id="CHEBI:18420"/>
    </ligand>
</feature>
<organism>
    <name type="scientific">Bacillus cereus (strain B4264)</name>
    <dbReference type="NCBI Taxonomy" id="405532"/>
    <lineage>
        <taxon>Bacteria</taxon>
        <taxon>Bacillati</taxon>
        <taxon>Bacillota</taxon>
        <taxon>Bacilli</taxon>
        <taxon>Bacillales</taxon>
        <taxon>Bacillaceae</taxon>
        <taxon>Bacillus</taxon>
        <taxon>Bacillus cereus group</taxon>
    </lineage>
</organism>
<gene>
    <name evidence="1" type="primary">fosB</name>
    <name type="ordered locus">BCB4264_A2032</name>
</gene>
<protein>
    <recommendedName>
        <fullName evidence="1">Metallothiol transferase FosB</fullName>
        <ecNumber evidence="1">2.5.1.-</ecNumber>
    </recommendedName>
    <alternativeName>
        <fullName evidence="1">Fosfomycin resistance protein</fullName>
    </alternativeName>
</protein>
<dbReference type="EC" id="2.5.1.-" evidence="1"/>
<dbReference type="EMBL" id="CP001176">
    <property type="protein sequence ID" value="ACK61677.1"/>
    <property type="molecule type" value="Genomic_DNA"/>
</dbReference>
<dbReference type="RefSeq" id="WP_000943774.1">
    <property type="nucleotide sequence ID" value="NZ_VEHB01000001.1"/>
</dbReference>
<dbReference type="SMR" id="B7HJF3"/>
<dbReference type="KEGG" id="bcb:BCB4264_A2032"/>
<dbReference type="HOGENOM" id="CLU_121356_0_0_9"/>
<dbReference type="Proteomes" id="UP000007096">
    <property type="component" value="Chromosome"/>
</dbReference>
<dbReference type="GO" id="GO:0005737">
    <property type="term" value="C:cytoplasm"/>
    <property type="evidence" value="ECO:0007669"/>
    <property type="project" value="UniProtKB-SubCell"/>
</dbReference>
<dbReference type="GO" id="GO:0000287">
    <property type="term" value="F:magnesium ion binding"/>
    <property type="evidence" value="ECO:0007669"/>
    <property type="project" value="UniProtKB-UniRule"/>
</dbReference>
<dbReference type="GO" id="GO:0016765">
    <property type="term" value="F:transferase activity, transferring alkyl or aryl (other than methyl) groups"/>
    <property type="evidence" value="ECO:0007669"/>
    <property type="project" value="UniProtKB-UniRule"/>
</dbReference>
<dbReference type="GO" id="GO:0046677">
    <property type="term" value="P:response to antibiotic"/>
    <property type="evidence" value="ECO:0007669"/>
    <property type="project" value="UniProtKB-UniRule"/>
</dbReference>
<dbReference type="FunFam" id="3.10.180.10:FF:000015">
    <property type="entry name" value="Metallothiol transferase FosB"/>
    <property type="match status" value="1"/>
</dbReference>
<dbReference type="Gene3D" id="3.10.180.10">
    <property type="entry name" value="2,3-Dihydroxybiphenyl 1,2-Dioxygenase, domain 1"/>
    <property type="match status" value="1"/>
</dbReference>
<dbReference type="HAMAP" id="MF_01512">
    <property type="entry name" value="FosB"/>
    <property type="match status" value="1"/>
</dbReference>
<dbReference type="InterPro" id="IPR051332">
    <property type="entry name" value="Fosfomycin_Res_Enzymes"/>
</dbReference>
<dbReference type="InterPro" id="IPR029068">
    <property type="entry name" value="Glyas_Bleomycin-R_OHBP_Dase"/>
</dbReference>
<dbReference type="InterPro" id="IPR004360">
    <property type="entry name" value="Glyas_Fos-R_dOase_dom"/>
</dbReference>
<dbReference type="InterPro" id="IPR022858">
    <property type="entry name" value="Metallothiol_Trafse_FosB"/>
</dbReference>
<dbReference type="InterPro" id="IPR037523">
    <property type="entry name" value="VOC"/>
</dbReference>
<dbReference type="NCBIfam" id="NF000493">
    <property type="entry name" value="Fos_BSH"/>
    <property type="match status" value="1"/>
</dbReference>
<dbReference type="NCBIfam" id="NF041541">
    <property type="entry name" value="fosBx1_fam"/>
    <property type="match status" value="1"/>
</dbReference>
<dbReference type="NCBIfam" id="NF003152">
    <property type="entry name" value="PRK04101.1"/>
    <property type="match status" value="1"/>
</dbReference>
<dbReference type="PANTHER" id="PTHR36113:SF6">
    <property type="entry name" value="FOSFOMYCIN RESISTANCE PROTEIN FOSX"/>
    <property type="match status" value="1"/>
</dbReference>
<dbReference type="PANTHER" id="PTHR36113">
    <property type="entry name" value="LYASE, PUTATIVE-RELATED-RELATED"/>
    <property type="match status" value="1"/>
</dbReference>
<dbReference type="Pfam" id="PF00903">
    <property type="entry name" value="Glyoxalase"/>
    <property type="match status" value="1"/>
</dbReference>
<dbReference type="SUPFAM" id="SSF54593">
    <property type="entry name" value="Glyoxalase/Bleomycin resistance protein/Dihydroxybiphenyl dioxygenase"/>
    <property type="match status" value="1"/>
</dbReference>
<dbReference type="PROSITE" id="PS51819">
    <property type="entry name" value="VOC"/>
    <property type="match status" value="1"/>
</dbReference>
<evidence type="ECO:0000255" key="1">
    <source>
        <dbReference type="HAMAP-Rule" id="MF_01512"/>
    </source>
</evidence>
<evidence type="ECO:0000255" key="2">
    <source>
        <dbReference type="PROSITE-ProRule" id="PRU01163"/>
    </source>
</evidence>